<reference key="1">
    <citation type="journal article" date="2003" name="J. Neurochem.">
        <title>Ero1-L, an ischemia-inducible gene from rat brain with homology to global ischemia-induced gene 11 (Giig11), is localized to neuronal dendrites by a dispersed identifier (ID) element-dependent mechanism.</title>
        <authorList>
            <person name="Chen D."/>
            <person name="Jin K."/>
            <person name="Kawaguchi K."/>
            <person name="Nakayama M."/>
            <person name="Zhou X."/>
            <person name="Xiong Z."/>
            <person name="Zhou A."/>
            <person name="Mao X.O."/>
            <person name="Greenberg D.A."/>
            <person name="Graham S.H."/>
            <person name="Simon R.P."/>
        </authorList>
    </citation>
    <scope>NUCLEOTIDE SEQUENCE [MRNA] (ISOFORMS 1 AND 2)</scope>
    <scope>SUBCELLULAR LOCATION</scope>
    <scope>INDUCTION</scope>
    <source>
        <strain>Sprague-Dawley</strain>
        <tissue>Brain</tissue>
    </source>
</reference>
<reference key="2">
    <citation type="submission" date="2002-03" db="EMBL/GenBank/DDBJ databases">
        <title>Cloning of the two forms of Ero1, alpha and beta and their regulation in cultured thyrocytes.</title>
        <authorList>
            <person name="Li B."/>
            <person name="Abplanalp W.A."/>
            <person name="Kim P.S."/>
        </authorList>
    </citation>
    <scope>NUCLEOTIDE SEQUENCE [MRNA] (ISOFORM 1)</scope>
    <source>
        <tissue>Thyroid</tissue>
    </source>
</reference>
<reference key="3">
    <citation type="journal article" date="2003" name="Eur. J. Biochem.">
        <title>The cellular oxygen tension regulates expression of the endoplasmic oxidoreductase ERO1-Lalpha.</title>
        <authorList>
            <person name="Gess B."/>
            <person name="Hofbauer K.H."/>
            <person name="Wenger R.H."/>
            <person name="Lohaus C."/>
            <person name="Meyer H.E."/>
            <person name="Kurtz A."/>
        </authorList>
    </citation>
    <scope>IDENTIFICATION BY MASS SPECTROMETRY</scope>
    <scope>INDUCTION</scope>
</reference>
<reference key="4">
    <citation type="journal article" date="2013" name="J. Proteome Res.">
        <title>Site-specific glycan-peptide analysis for determination of N-glycoproteome heterogeneity.</title>
        <authorList>
            <person name="Parker B.L."/>
            <person name="Thaysen-Andersen M."/>
            <person name="Solis N."/>
            <person name="Scott N.E."/>
            <person name="Larsen M.R."/>
            <person name="Graham M.E."/>
            <person name="Packer N.H."/>
            <person name="Cordwell S.J."/>
        </authorList>
    </citation>
    <scope>GLYCOSYLATION [LARGE SCALE ANALYSIS] AT ASN-276</scope>
    <scope>IDENTIFICATION BY MASS SPECTROMETRY [LARGE SCALE ANALYSIS]</scope>
    <source>
        <tissue>Brain</tissue>
    </source>
</reference>
<accession>Q8R4A1</accession>
<accession>Q8VH29</accession>
<accession>Q8VH30</accession>
<sequence length="464" mass="54018">MGRGWGLLVGLLGVVWLLRSGQGEEQQQETAAQRCFCQVSGYLDDCTCDVETIDKFNNYRLFPRLQKLLESDYFRYYKVNLRKPCPFWNDINQCGRRDCAVKPCHSDEVPDGIKSASYKYSKEANLLEECEQAERLGAVDESLSEETQKAVLQWTKHDDSSDSFCEVDDIQSPDAEYVDLLLNPERYTGYKGPDAWRIWSVIYEENCFKPQTIQRPLASGQGKHKENTFYSWLEGLCVEKRAFYRLISGLHASINVHLSARYLLQDNWLEKKWGHNVTEFQQRFDGVLTEGEGPRRLKNLYFLYLIELRALSKVLPFFERPDFQLFTGNKVQDVENKELLLEILHEVKSFPLHFDENSFFAGDKNEAHKLKEDFRLHFRNISRIMDCVGCFKCRLWGKLQTQGLGTALKILFSEKLIANMPESGPSYEFQLTRQEIVSLFNAFGRISTSVRELENFRHLLQNVH</sequence>
<keyword id="KW-0025">Alternative splicing</keyword>
<keyword id="KW-0053">Apoptosis</keyword>
<keyword id="KW-0966">Cell projection</keyword>
<keyword id="KW-1015">Disulfide bond</keyword>
<keyword id="KW-0249">Electron transport</keyword>
<keyword id="KW-0256">Endoplasmic reticulum</keyword>
<keyword id="KW-0274">FAD</keyword>
<keyword id="KW-0285">Flavoprotein</keyword>
<keyword id="KW-0325">Glycoprotein</keyword>
<keyword id="KW-0333">Golgi apparatus</keyword>
<keyword id="KW-0472">Membrane</keyword>
<keyword id="KW-0560">Oxidoreductase</keyword>
<keyword id="KW-0597">Phosphoprotein</keyword>
<keyword id="KW-0676">Redox-active center</keyword>
<keyword id="KW-1185">Reference proteome</keyword>
<keyword id="KW-0964">Secreted</keyword>
<keyword id="KW-0732">Signal</keyword>
<keyword id="KW-0813">Transport</keyword>
<comment type="function">
    <text evidence="3">Oxidoreductase involved in disulfide bond formation in the endoplasmic reticulum. Efficiently reoxidizes P4HB/PDI, the enzyme catalyzing protein disulfide formation, in order to allow P4HB to sustain additional rounds of disulfide formation. Following P4HB reoxidation, passes its electrons to molecular oxygen via FAD, leading to the production of reactive oxygen species (ROS) in the cell. Required for the proper folding of immunoglobulins. Plays an important role in ER stress-induced, CHOP-dependent apoptosis by activating the inositol 1,4,5-trisphosphate receptor IP3R1.</text>
</comment>
<comment type="cofactor">
    <cofactor evidence="3">
        <name>FAD</name>
        <dbReference type="ChEBI" id="CHEBI:57692"/>
    </cofactor>
</comment>
<comment type="activity regulation">
    <text evidence="1">Enzyme activity is tightly regulated to prevent the accumulation of reactive oxygen species in the endoplasmic reticulum. Reversibly down-regulated by the formation of disulfide bonds between the active site Cys-94 and Cys-130, and between Cys-99 and Cys-104. Glutathione may be required to regulate its activity in the endoplasmic reticulum (By similarity).</text>
</comment>
<comment type="subunit">
    <text evidence="3">Predominantly monomer. May function both as a monomer and a homodimer. Interacts with PDILT. Interacts with ERP44; the interaction results in retention of ERO1A in the endoplasmic reticulum.</text>
</comment>
<comment type="subcellular location">
    <subcellularLocation>
        <location evidence="3">Endoplasmic reticulum membrane</location>
        <topology evidence="3">Peripheral membrane protein</topology>
        <orientation evidence="3">Lumenal side</orientation>
    </subcellularLocation>
    <subcellularLocation>
        <location evidence="3">Golgi apparatus lumen</location>
    </subcellularLocation>
    <subcellularLocation>
        <location evidence="3">Secreted</location>
    </subcellularLocation>
    <subcellularLocation>
        <location evidence="5">Cell projection</location>
        <location evidence="5">Dendrite</location>
    </subcellularLocation>
    <text evidence="3 5">The association with ERP44 is essential for its retention in the endoplasmic reticulum (By similarity). In neurons, it localizes to dendrites (PubMed:12694393).</text>
</comment>
<comment type="alternative products">
    <event type="alternative splicing"/>
    <isoform>
        <id>Q8R4A1-1</id>
        <name>1</name>
        <sequence type="displayed"/>
    </isoform>
    <isoform>
        <id>Q8R4A1-2</id>
        <name>2</name>
        <sequence type="described" ref="VSP_011023"/>
    </isoform>
</comment>
<comment type="induction">
    <text evidence="5 6">Stimulated by hypoxia; suggesting that it is regulated via the HIF-pathway. Increased expression in brain after global cerebral ischemia.</text>
</comment>
<comment type="PTM">
    <text>N-glycosylated.</text>
</comment>
<comment type="PTM">
    <text evidence="1">The Cys-94/Cys-99 and Cys-390/Cys-393 disulfide bonds constitute the redox-active center. The Cys-94/Cys-99 disulfide bond may accept electron from P4HB and funnel them to the active site disulfide Cys-390/Cys-393. The regulatory Cys-99/Cys-104 disulfide bond stabilizes the other regulatory bond Cys-94/Cys-130 (By similarity).</text>
</comment>
<comment type="PTM">
    <text evidence="2 3">Phosphorylated on Ser-144 by FAM20C in the Golgi which increases its enzymatic activity (By similarity). Phosphorylation is induced by lactation (By similarity). It is also induced by hypoxia and reductive stress (By similarity).</text>
</comment>
<comment type="similarity">
    <text evidence="8">Belongs to the EROs family.</text>
</comment>
<gene>
    <name evidence="9" type="primary">Ero1a</name>
    <name type="synonym">Ero1l</name>
    <name type="synonym">Giig11</name>
</gene>
<evidence type="ECO:0000250" key="1"/>
<evidence type="ECO:0000250" key="2">
    <source>
        <dbReference type="UniProtKB" id="Q8R180"/>
    </source>
</evidence>
<evidence type="ECO:0000250" key="3">
    <source>
        <dbReference type="UniProtKB" id="Q96HE7"/>
    </source>
</evidence>
<evidence type="ECO:0000255" key="4"/>
<evidence type="ECO:0000269" key="5">
    <source>
    </source>
</evidence>
<evidence type="ECO:0000269" key="6">
    <source>
    </source>
</evidence>
<evidence type="ECO:0000303" key="7">
    <source>
    </source>
</evidence>
<evidence type="ECO:0000305" key="8"/>
<evidence type="ECO:0000312" key="9">
    <source>
        <dbReference type="RGD" id="621713"/>
    </source>
</evidence>
<evidence type="ECO:0007744" key="10">
    <source>
    </source>
</evidence>
<proteinExistence type="evidence at protein level"/>
<protein>
    <recommendedName>
        <fullName>ERO1-like protein alpha</fullName>
        <shortName>ERO1-L</shortName>
        <shortName>ERO1-L-alpha</shortName>
        <ecNumber evidence="3">1.8.4.-</ecNumber>
    </recommendedName>
    <alternativeName>
        <fullName evidence="9">Endoplasmic reticulum oxidoreductase alpha</fullName>
    </alternativeName>
    <alternativeName>
        <fullName>Endoplasmic reticulum oxidoreductin-1-like protein</fullName>
    </alternativeName>
    <alternativeName>
        <fullName>Global ischemia-induced protein 11</fullName>
    </alternativeName>
    <alternativeName>
        <fullName>Oxidoreductin-1-L-alpha</fullName>
    </alternativeName>
</protein>
<feature type="signal peptide" evidence="4">
    <location>
        <begin position="1"/>
        <end position="23"/>
    </location>
</feature>
<feature type="chain" id="PRO_0000008417" description="ERO1-like protein alpha">
    <location>
        <begin position="24"/>
        <end position="464"/>
    </location>
</feature>
<feature type="binding site" evidence="3">
    <location>
        <position position="186"/>
    </location>
    <ligand>
        <name>FAD</name>
        <dbReference type="ChEBI" id="CHEBI:57692"/>
    </ligand>
</feature>
<feature type="binding site" evidence="3">
    <location>
        <position position="188"/>
    </location>
    <ligand>
        <name>FAD</name>
        <dbReference type="ChEBI" id="CHEBI:57692"/>
    </ligand>
</feature>
<feature type="binding site" evidence="3">
    <location>
        <position position="199"/>
    </location>
    <ligand>
        <name>FAD</name>
        <dbReference type="ChEBI" id="CHEBI:57692"/>
    </ligand>
</feature>
<feature type="binding site" evidence="3">
    <location>
        <position position="248"/>
    </location>
    <ligand>
        <name>FAD</name>
        <dbReference type="ChEBI" id="CHEBI:57692"/>
    </ligand>
</feature>
<feature type="binding site" evidence="3">
    <location>
        <position position="251"/>
    </location>
    <ligand>
        <name>FAD</name>
        <dbReference type="ChEBI" id="CHEBI:57692"/>
    </ligand>
</feature>
<feature type="binding site" evidence="3">
    <location>
        <position position="283"/>
    </location>
    <ligand>
        <name>FAD</name>
        <dbReference type="ChEBI" id="CHEBI:57692"/>
    </ligand>
</feature>
<feature type="binding site" evidence="3">
    <location>
        <position position="296"/>
    </location>
    <ligand>
        <name>FAD</name>
        <dbReference type="ChEBI" id="CHEBI:57692"/>
    </ligand>
</feature>
<feature type="modified residue" description="Phosphoserine" evidence="3">
    <location>
        <position position="106"/>
    </location>
</feature>
<feature type="modified residue" description="Phosphoserine" evidence="3">
    <location>
        <position position="142"/>
    </location>
</feature>
<feature type="modified residue" description="Phosphoserine" evidence="3">
    <location>
        <position position="144"/>
    </location>
</feature>
<feature type="glycosylation site" description="N-linked (GlcNAc...) asparagine" evidence="10">
    <location>
        <position position="276"/>
    </location>
</feature>
<feature type="glycosylation site" description="N-linked (GlcNAc...) asparagine" evidence="4">
    <location>
        <position position="380"/>
    </location>
</feature>
<feature type="disulfide bond" evidence="3">
    <location>
        <begin position="35"/>
        <end position="48"/>
    </location>
</feature>
<feature type="disulfide bond" evidence="3">
    <location>
        <begin position="37"/>
        <end position="46"/>
    </location>
</feature>
<feature type="disulfide bond" evidence="3">
    <location>
        <begin position="85"/>
        <end position="387"/>
    </location>
</feature>
<feature type="disulfide bond" description="Alternate; alternate" evidence="3">
    <location>
        <begin position="94"/>
        <end position="130"/>
    </location>
</feature>
<feature type="disulfide bond" description="Redox-active; alternate" evidence="3">
    <location>
        <begin position="94"/>
        <end position="99"/>
    </location>
</feature>
<feature type="disulfide bond" description="Alternate" evidence="3">
    <location>
        <begin position="99"/>
        <end position="104"/>
    </location>
</feature>
<feature type="disulfide bond" evidence="3">
    <location>
        <begin position="207"/>
        <end position="237"/>
    </location>
</feature>
<feature type="disulfide bond" description="Redox-active" evidence="3">
    <location>
        <begin position="390"/>
        <end position="393"/>
    </location>
</feature>
<feature type="splice variant" id="VSP_011023" description="In isoform 2." evidence="7">
    <original>VWLLRSGQGEEQQQETAAQRCFCQVSGYLDDCTCDVETIDKFNNYRLFPRLQKLLESDYFRYYKVNLRKPCPFWNDINQCGRRDCAVKPCHSDEVPDGIKSASYKYSK</original>
    <variation>FQ</variation>
    <location>
        <begin position="15"/>
        <end position="122"/>
    </location>
</feature>
<feature type="sequence conflict" description="In Ref. 1; AAL61547/AAL61548." evidence="8" ref="1">
    <original>G</original>
    <variation>A</variation>
    <location>
        <position position="4"/>
    </location>
</feature>
<feature type="sequence conflict" description="In Ref. 1; AAL61547." evidence="8" ref="1">
    <original>SGQ</original>
    <variation>LGH</variation>
    <location>
        <begin position="20"/>
        <end position="22"/>
    </location>
</feature>
<feature type="sequence conflict" description="In Ref. 1; AAL61547." evidence="8" ref="1">
    <original>QQQ</original>
    <variation>RRP</variation>
    <location>
        <begin position="26"/>
        <end position="28"/>
    </location>
</feature>
<feature type="sequence conflict" description="In Ref. 1; AAL61547/AAL61548." evidence="8" ref="1">
    <original>N</original>
    <variation>H</variation>
    <location>
        <position position="365"/>
    </location>
</feature>
<organism>
    <name type="scientific">Rattus norvegicus</name>
    <name type="common">Rat</name>
    <dbReference type="NCBI Taxonomy" id="10116"/>
    <lineage>
        <taxon>Eukaryota</taxon>
        <taxon>Metazoa</taxon>
        <taxon>Chordata</taxon>
        <taxon>Craniata</taxon>
        <taxon>Vertebrata</taxon>
        <taxon>Euteleostomi</taxon>
        <taxon>Mammalia</taxon>
        <taxon>Eutheria</taxon>
        <taxon>Euarchontoglires</taxon>
        <taxon>Glires</taxon>
        <taxon>Rodentia</taxon>
        <taxon>Myomorpha</taxon>
        <taxon>Muroidea</taxon>
        <taxon>Muridae</taxon>
        <taxon>Murinae</taxon>
        <taxon>Rattus</taxon>
    </lineage>
</organism>
<name>ERO1A_RAT</name>
<dbReference type="EC" id="1.8.4.-" evidence="3"/>
<dbReference type="EMBL" id="AY071924">
    <property type="protein sequence ID" value="AAL61547.1"/>
    <property type="molecule type" value="mRNA"/>
</dbReference>
<dbReference type="EMBL" id="AY071925">
    <property type="protein sequence ID" value="AAL61548.1"/>
    <property type="molecule type" value="mRNA"/>
</dbReference>
<dbReference type="EMBL" id="AF489855">
    <property type="protein sequence ID" value="AAL96669.1"/>
    <property type="molecule type" value="mRNA"/>
</dbReference>
<dbReference type="RefSeq" id="NP_612537.2">
    <molecule id="Q8R4A1-1"/>
    <property type="nucleotide sequence ID" value="NM_138528.2"/>
</dbReference>
<dbReference type="SMR" id="Q8R4A1"/>
<dbReference type="FunCoup" id="Q8R4A1">
    <property type="interactions" value="2586"/>
</dbReference>
<dbReference type="IntAct" id="Q8R4A1">
    <property type="interactions" value="2"/>
</dbReference>
<dbReference type="STRING" id="10116.ENSRNOP00000009404"/>
<dbReference type="GlyCosmos" id="Q8R4A1">
    <property type="glycosylation" value="2 sites, 6 glycans"/>
</dbReference>
<dbReference type="GlyGen" id="Q8R4A1">
    <property type="glycosylation" value="2 sites, 6 N-linked glycans (1 site)"/>
</dbReference>
<dbReference type="iPTMnet" id="Q8R4A1"/>
<dbReference type="PhosphoSitePlus" id="Q8R4A1"/>
<dbReference type="jPOST" id="Q8R4A1"/>
<dbReference type="PaxDb" id="10116-ENSRNOP00000009404"/>
<dbReference type="Ensembl" id="ENSRNOT00000116811.1">
    <molecule id="Q8R4A1-1"/>
    <property type="protein sequence ID" value="ENSRNOP00000094430.1"/>
    <property type="gene ID" value="ENSRNOG00000006462.8"/>
</dbReference>
<dbReference type="GeneID" id="171562"/>
<dbReference type="KEGG" id="rno:171562"/>
<dbReference type="UCSC" id="RGD:621713">
    <molecule id="Q8R4A1-1"/>
    <property type="organism name" value="rat"/>
</dbReference>
<dbReference type="AGR" id="RGD:621713"/>
<dbReference type="CTD" id="30001"/>
<dbReference type="RGD" id="621713">
    <property type="gene designation" value="Ero1a"/>
</dbReference>
<dbReference type="eggNOG" id="KOG2608">
    <property type="taxonomic scope" value="Eukaryota"/>
</dbReference>
<dbReference type="GeneTree" id="ENSGT00390000007753"/>
<dbReference type="HOGENOM" id="CLU_023061_2_2_1"/>
<dbReference type="InParanoid" id="Q8R4A1"/>
<dbReference type="OMA" id="PCGIRSE"/>
<dbReference type="OrthoDB" id="269384at2759"/>
<dbReference type="PhylomeDB" id="Q8R4A1"/>
<dbReference type="TreeFam" id="TF314471"/>
<dbReference type="Reactome" id="R-RNO-3299685">
    <property type="pathway name" value="Detoxification of Reactive Oxygen Species"/>
</dbReference>
<dbReference type="PRO" id="PR:Q8R4A1"/>
<dbReference type="Proteomes" id="UP000002494">
    <property type="component" value="Chromosome 15"/>
</dbReference>
<dbReference type="Bgee" id="ENSRNOG00000006462">
    <property type="expression patterns" value="Expressed in stomach and 19 other cell types or tissues"/>
</dbReference>
<dbReference type="GO" id="GO:0030425">
    <property type="term" value="C:dendrite"/>
    <property type="evidence" value="ECO:0000314"/>
    <property type="project" value="RGD"/>
</dbReference>
<dbReference type="GO" id="GO:0005783">
    <property type="term" value="C:endoplasmic reticulum"/>
    <property type="evidence" value="ECO:0000250"/>
    <property type="project" value="UniProtKB"/>
</dbReference>
<dbReference type="GO" id="GO:0005789">
    <property type="term" value="C:endoplasmic reticulum membrane"/>
    <property type="evidence" value="ECO:0000318"/>
    <property type="project" value="GO_Central"/>
</dbReference>
<dbReference type="GO" id="GO:0005615">
    <property type="term" value="C:extracellular space"/>
    <property type="evidence" value="ECO:0000250"/>
    <property type="project" value="UniProtKB"/>
</dbReference>
<dbReference type="GO" id="GO:0005796">
    <property type="term" value="C:Golgi lumen"/>
    <property type="evidence" value="ECO:0000250"/>
    <property type="project" value="UniProtKB"/>
</dbReference>
<dbReference type="GO" id="GO:0071949">
    <property type="term" value="F:FAD binding"/>
    <property type="evidence" value="ECO:0007669"/>
    <property type="project" value="InterPro"/>
</dbReference>
<dbReference type="GO" id="GO:0016491">
    <property type="term" value="F:oxidoreductase activity"/>
    <property type="evidence" value="ECO:0000250"/>
    <property type="project" value="UniProtKB"/>
</dbReference>
<dbReference type="GO" id="GO:0015035">
    <property type="term" value="F:protein-disulfide reductase activity"/>
    <property type="evidence" value="ECO:0000266"/>
    <property type="project" value="RGD"/>
</dbReference>
<dbReference type="GO" id="GO:0016972">
    <property type="term" value="F:thiol oxidase activity"/>
    <property type="evidence" value="ECO:0007669"/>
    <property type="project" value="InterPro"/>
</dbReference>
<dbReference type="GO" id="GO:0050873">
    <property type="term" value="P:brown fat cell differentiation"/>
    <property type="evidence" value="ECO:0000266"/>
    <property type="project" value="RGD"/>
</dbReference>
<dbReference type="GO" id="GO:0045454">
    <property type="term" value="P:cell redox homeostasis"/>
    <property type="evidence" value="ECO:0000250"/>
    <property type="project" value="UniProtKB"/>
</dbReference>
<dbReference type="GO" id="GO:0071456">
    <property type="term" value="P:cellular response to hypoxia"/>
    <property type="evidence" value="ECO:0000270"/>
    <property type="project" value="RGD"/>
</dbReference>
<dbReference type="GO" id="GO:0051085">
    <property type="term" value="P:chaperone cofactor-dependent protein refolding"/>
    <property type="evidence" value="ECO:0000266"/>
    <property type="project" value="RGD"/>
</dbReference>
<dbReference type="GO" id="GO:0030199">
    <property type="term" value="P:collagen fibril organization"/>
    <property type="evidence" value="ECO:0000266"/>
    <property type="project" value="RGD"/>
</dbReference>
<dbReference type="GO" id="GO:0030968">
    <property type="term" value="P:endoplasmic reticulum unfolded protein response"/>
    <property type="evidence" value="ECO:0000266"/>
    <property type="project" value="RGD"/>
</dbReference>
<dbReference type="GO" id="GO:0030198">
    <property type="term" value="P:extracellular matrix organization"/>
    <property type="evidence" value="ECO:0000266"/>
    <property type="project" value="RGD"/>
</dbReference>
<dbReference type="GO" id="GO:0070059">
    <property type="term" value="P:intrinsic apoptotic signaling pathway in response to endoplasmic reticulum stress"/>
    <property type="evidence" value="ECO:0000250"/>
    <property type="project" value="UniProtKB"/>
</dbReference>
<dbReference type="GO" id="GO:0019852">
    <property type="term" value="P:L-ascorbic acid metabolic process"/>
    <property type="evidence" value="ECO:0000266"/>
    <property type="project" value="RGD"/>
</dbReference>
<dbReference type="GO" id="GO:0006457">
    <property type="term" value="P:protein folding"/>
    <property type="evidence" value="ECO:0000250"/>
    <property type="project" value="UniProtKB"/>
</dbReference>
<dbReference type="GO" id="GO:0034975">
    <property type="term" value="P:protein folding in endoplasmic reticulum"/>
    <property type="evidence" value="ECO:0000318"/>
    <property type="project" value="GO_Central"/>
</dbReference>
<dbReference type="GO" id="GO:0051209">
    <property type="term" value="P:release of sequestered calcium ion into cytosol"/>
    <property type="evidence" value="ECO:0000250"/>
    <property type="project" value="UniProtKB"/>
</dbReference>
<dbReference type="GO" id="GO:0034976">
    <property type="term" value="P:response to endoplasmic reticulum stress"/>
    <property type="evidence" value="ECO:0000250"/>
    <property type="project" value="UniProtKB"/>
</dbReference>
<dbReference type="GO" id="GO:0006979">
    <property type="term" value="P:response to oxidative stress"/>
    <property type="evidence" value="ECO:0000266"/>
    <property type="project" value="RGD"/>
</dbReference>
<dbReference type="GO" id="GO:0007519">
    <property type="term" value="P:skeletal muscle tissue development"/>
    <property type="evidence" value="ECO:0000266"/>
    <property type="project" value="RGD"/>
</dbReference>
<dbReference type="GO" id="GO:0007179">
    <property type="term" value="P:transforming growth factor beta receptor signaling pathway"/>
    <property type="evidence" value="ECO:0000266"/>
    <property type="project" value="RGD"/>
</dbReference>
<dbReference type="InterPro" id="IPR007266">
    <property type="entry name" value="Ero1"/>
</dbReference>
<dbReference type="InterPro" id="IPR037192">
    <property type="entry name" value="ERO1-like_sf"/>
</dbReference>
<dbReference type="PANTHER" id="PTHR12613:SF1">
    <property type="entry name" value="ERO1-LIKE PROTEIN ALPHA"/>
    <property type="match status" value="1"/>
</dbReference>
<dbReference type="PANTHER" id="PTHR12613">
    <property type="entry name" value="ERO1-RELATED"/>
    <property type="match status" value="1"/>
</dbReference>
<dbReference type="Pfam" id="PF04137">
    <property type="entry name" value="ERO1"/>
    <property type="match status" value="1"/>
</dbReference>
<dbReference type="PIRSF" id="PIRSF017205">
    <property type="entry name" value="ERO1"/>
    <property type="match status" value="1"/>
</dbReference>
<dbReference type="SUPFAM" id="SSF110019">
    <property type="entry name" value="ERO1-like"/>
    <property type="match status" value="1"/>
</dbReference>